<comment type="function">
    <text>May play a role in microtubule-dependent retrograde axonal transport. May function as the motor for the transport of multivesicular body (MVB)-like organelles in dendrites.</text>
</comment>
<comment type="subcellular location">
    <subcellularLocation>
        <location evidence="5">Cytoplasm</location>
        <location evidence="5">Cytoskeleton</location>
    </subcellularLocation>
</comment>
<comment type="tissue specificity">
    <text>Present in axons and dendrites of neurons in the central and peripheral nervous systems.</text>
</comment>
<comment type="disruption phenotype">
    <text evidence="4">No visible phenotype.</text>
</comment>
<comment type="similarity">
    <text evidence="2">Belongs to the TRAFAC class myosin-kinesin ATPase superfamily. Kinesin family.</text>
</comment>
<protein>
    <recommendedName>
        <fullName>Kinesin-like protein KIFC2</fullName>
    </recommendedName>
</protein>
<name>KIFC2_MOUSE</name>
<sequence length="792" mass="85686">MYAFYSLLIYIFYSLFRRDGGAAAVSDPGDPTQKSGGQPRGRRRPDQFTSELWSELNSLAGCSESEDGQKGAEGGAAEVSLEEALMRLAEFLSVQLGAEESCGTTPDLGKPGEVPPLLTVTSQLLALLAWTRSPRGRQALLQGTQPTCPVQPSTLDGSLSQEESSSQPTPILDEVPRDETQEHQPLQLEEEQRVWQRLEQLILGQLEELRQQLEQQEEELSRLRLGVGVTDSEKRVQHLTLENEALKQSLSLTRDLLLHWGPGPLPRLSQEEAGALLELQGQLQEAQDTTEALRVQLGAQELQLQGLRGALRQLQQETEQNCRQELQQVHGQLAGLRARMASLRQGCGDLRGLVSTFTQSCQGSLSEAQGQVSWALGALSAGKAKTQLSEGNQAPPTGCSGRLLELKGNIRVLCRLRPAEGQPSSLVSVEPGQGGTITTCYRGRQHCFRLDWVFPQDASQEEVFRQLEPAVLSCLQGYSVCIFTYGQTGTGKTYSMEGPPEDPGIAPRALQLLFREMGTGGHHHVTLSMVEIYNEAVRDLLATGPPERLVVRQGPAGQGGIQVAGLTHWDVPNLETLHQMLSLGRSNRATAATVMNQHSSRSHALVTLTLRAASPPRPQGITGTLHLVDLAGSERVWKAGVASPVQRDPNGARRLREAQAINRSLLALGGVMAALRARRPHVPFRDSQLTRLLQPALWAGTTAVLLLQISTRAEDLGETICSLKFAERVGQVELGPARRRRAPRSGTPSSLSTDTPLTGTSCTPTPSPGSPPSTSPNSCSGLTLEPPGDPPP</sequence>
<accession>O08672</accession>
<accession>O08613</accession>
<dbReference type="EMBL" id="D49545">
    <property type="protein sequence ID" value="BAA19677.1"/>
    <property type="molecule type" value="mRNA"/>
</dbReference>
<dbReference type="EMBL" id="U92949">
    <property type="protein sequence ID" value="AAB51397.1"/>
    <property type="molecule type" value="mRNA"/>
</dbReference>
<dbReference type="CCDS" id="CCDS27583.1"/>
<dbReference type="SMR" id="O08672"/>
<dbReference type="FunCoup" id="O08672">
    <property type="interactions" value="114"/>
</dbReference>
<dbReference type="STRING" id="10090.ENSMUSP00000004294"/>
<dbReference type="GlyGen" id="O08672">
    <property type="glycosylation" value="2 sites"/>
</dbReference>
<dbReference type="iPTMnet" id="O08672"/>
<dbReference type="PhosphoSitePlus" id="O08672"/>
<dbReference type="PaxDb" id="10090-ENSMUSP00000004294"/>
<dbReference type="ProteomicsDB" id="263606"/>
<dbReference type="AGR" id="MGI:109187"/>
<dbReference type="MGI" id="MGI:109187">
    <property type="gene designation" value="Kifc2"/>
</dbReference>
<dbReference type="eggNOG" id="KOG0239">
    <property type="taxonomic scope" value="Eukaryota"/>
</dbReference>
<dbReference type="InParanoid" id="O08672"/>
<dbReference type="PhylomeDB" id="O08672"/>
<dbReference type="Reactome" id="R-MMU-2132295">
    <property type="pathway name" value="MHC class II antigen presentation"/>
</dbReference>
<dbReference type="Reactome" id="R-MMU-6811434">
    <property type="pathway name" value="COPI-dependent Golgi-to-ER retrograde traffic"/>
</dbReference>
<dbReference type="Reactome" id="R-MMU-983189">
    <property type="pathway name" value="Kinesins"/>
</dbReference>
<dbReference type="PRO" id="PR:O08672"/>
<dbReference type="Proteomes" id="UP000000589">
    <property type="component" value="Unplaced"/>
</dbReference>
<dbReference type="RNAct" id="O08672">
    <property type="molecule type" value="protein"/>
</dbReference>
<dbReference type="GO" id="GO:0005737">
    <property type="term" value="C:cytoplasm"/>
    <property type="evidence" value="ECO:0007669"/>
    <property type="project" value="UniProtKB-KW"/>
</dbReference>
<dbReference type="GO" id="GO:0005874">
    <property type="term" value="C:microtubule"/>
    <property type="evidence" value="ECO:0007669"/>
    <property type="project" value="UniProtKB-KW"/>
</dbReference>
<dbReference type="GO" id="GO:0005524">
    <property type="term" value="F:ATP binding"/>
    <property type="evidence" value="ECO:0007669"/>
    <property type="project" value="UniProtKB-KW"/>
</dbReference>
<dbReference type="GO" id="GO:0008017">
    <property type="term" value="F:microtubule binding"/>
    <property type="evidence" value="ECO:0007669"/>
    <property type="project" value="InterPro"/>
</dbReference>
<dbReference type="GO" id="GO:0003777">
    <property type="term" value="F:microtubule motor activity"/>
    <property type="evidence" value="ECO:0007669"/>
    <property type="project" value="InterPro"/>
</dbReference>
<dbReference type="GO" id="GO:0007018">
    <property type="term" value="P:microtubule-based movement"/>
    <property type="evidence" value="ECO:0007669"/>
    <property type="project" value="InterPro"/>
</dbReference>
<dbReference type="CDD" id="cd01366">
    <property type="entry name" value="KISc_C_terminal"/>
    <property type="match status" value="1"/>
</dbReference>
<dbReference type="FunFam" id="3.40.850.10:FF:000066">
    <property type="entry name" value="Kinesin-like protein"/>
    <property type="match status" value="1"/>
</dbReference>
<dbReference type="Gene3D" id="3.40.850.10">
    <property type="entry name" value="Kinesin motor domain"/>
    <property type="match status" value="1"/>
</dbReference>
<dbReference type="InterPro" id="IPR027640">
    <property type="entry name" value="Kinesin-like_fam"/>
</dbReference>
<dbReference type="InterPro" id="IPR019821">
    <property type="entry name" value="Kinesin_motor_CS"/>
</dbReference>
<dbReference type="InterPro" id="IPR001752">
    <property type="entry name" value="Kinesin_motor_dom"/>
</dbReference>
<dbReference type="InterPro" id="IPR036961">
    <property type="entry name" value="Kinesin_motor_dom_sf"/>
</dbReference>
<dbReference type="InterPro" id="IPR027417">
    <property type="entry name" value="P-loop_NTPase"/>
</dbReference>
<dbReference type="PANTHER" id="PTHR47972:SF5">
    <property type="entry name" value="KINESIN-LIKE PROTEIN KIFC3"/>
    <property type="match status" value="1"/>
</dbReference>
<dbReference type="PANTHER" id="PTHR47972">
    <property type="entry name" value="KINESIN-LIKE PROTEIN KLP-3"/>
    <property type="match status" value="1"/>
</dbReference>
<dbReference type="Pfam" id="PF00225">
    <property type="entry name" value="Kinesin"/>
    <property type="match status" value="1"/>
</dbReference>
<dbReference type="PRINTS" id="PR00380">
    <property type="entry name" value="KINESINHEAVY"/>
</dbReference>
<dbReference type="SMART" id="SM00129">
    <property type="entry name" value="KISc"/>
    <property type="match status" value="1"/>
</dbReference>
<dbReference type="SUPFAM" id="SSF52540">
    <property type="entry name" value="P-loop containing nucleoside triphosphate hydrolases"/>
    <property type="match status" value="1"/>
</dbReference>
<dbReference type="PROSITE" id="PS00411">
    <property type="entry name" value="KINESIN_MOTOR_1"/>
    <property type="match status" value="1"/>
</dbReference>
<dbReference type="PROSITE" id="PS50067">
    <property type="entry name" value="KINESIN_MOTOR_2"/>
    <property type="match status" value="1"/>
</dbReference>
<feature type="chain" id="PRO_0000125430" description="Kinesin-like protein KIFC2">
    <location>
        <begin position="1"/>
        <end position="792"/>
    </location>
</feature>
<feature type="domain" description="Kinesin motor" evidence="2">
    <location>
        <begin position="409"/>
        <end position="732"/>
    </location>
</feature>
<feature type="region of interest" description="Disordered" evidence="3">
    <location>
        <begin position="22"/>
        <end position="45"/>
    </location>
</feature>
<feature type="region of interest" description="Disordered" evidence="3">
    <location>
        <begin position="142"/>
        <end position="184"/>
    </location>
</feature>
<feature type="region of interest" description="Disordered" evidence="3">
    <location>
        <begin position="734"/>
        <end position="792"/>
    </location>
</feature>
<feature type="coiled-coil region" evidence="1">
    <location>
        <begin position="186"/>
        <end position="347"/>
    </location>
</feature>
<feature type="compositionally biased region" description="Polar residues" evidence="3">
    <location>
        <begin position="142"/>
        <end position="169"/>
    </location>
</feature>
<feature type="compositionally biased region" description="Low complexity" evidence="3">
    <location>
        <begin position="744"/>
        <end position="764"/>
    </location>
</feature>
<feature type="compositionally biased region" description="Pro residues" evidence="3">
    <location>
        <begin position="765"/>
        <end position="774"/>
    </location>
</feature>
<feature type="binding site" evidence="2">
    <location>
        <begin position="486"/>
        <end position="493"/>
    </location>
    <ligand>
        <name>ATP</name>
        <dbReference type="ChEBI" id="CHEBI:30616"/>
    </ligand>
</feature>
<feature type="sequence conflict" description="In Ref. 2; AAB51397." evidence="5" ref="2">
    <original>C</original>
    <variation>R</variation>
    <location>
        <position position="447"/>
    </location>
</feature>
<feature type="sequence conflict" description="In Ref. 2; AAB51397." evidence="5" ref="2">
    <original>P</original>
    <variation>A</variation>
    <location>
        <position position="618"/>
    </location>
</feature>
<feature type="sequence conflict" description="In Ref. 2; AAB51397." evidence="5" ref="2">
    <original>W</original>
    <variation>C</variation>
    <location>
        <position position="698"/>
    </location>
</feature>
<proteinExistence type="evidence at protein level"/>
<gene>
    <name type="primary">Kifc2</name>
</gene>
<reference key="1">
    <citation type="journal article" date="1997" name="Neuron">
        <title>KIFC2 is a novel neuron-specific C-terminal type kinesin superfamily motor for dendritic transport of multivesicular body-like organelles.</title>
        <authorList>
            <person name="Saito N."/>
            <person name="Okada Y."/>
            <person name="Noda Y."/>
            <person name="Kinoshita Y."/>
            <person name="Kondo S."/>
            <person name="Hirokawa N."/>
        </authorList>
    </citation>
    <scope>NUCLEOTIDE SEQUENCE [MRNA]</scope>
    <source>
        <strain>ICR</strain>
        <tissue>Brain</tissue>
    </source>
</reference>
<reference key="2">
    <citation type="journal article" date="1997" name="Neuron">
        <title>Characterization of KIFC2, a neuronal kinesin superfamily member in mouse.</title>
        <authorList>
            <person name="Hanlon D.W."/>
            <person name="Yang Z."/>
            <person name="Goldstein L.S."/>
        </authorList>
    </citation>
    <scope>NUCLEOTIDE SEQUENCE [MRNA]</scope>
    <source>
        <strain>BALB/cJ</strain>
    </source>
</reference>
<reference key="3">
    <citation type="journal article" date="2001" name="Mol. Cell. Biol.">
        <title>Functional analysis of mouse C-terminal kinesin motor KifC2.</title>
        <authorList>
            <person name="Yang Z."/>
            <person name="Roberts E.A."/>
            <person name="Goldstein L.S."/>
        </authorList>
    </citation>
    <scope>DISRUPTION PHENOTYPE</scope>
</reference>
<reference key="4">
    <citation type="journal article" date="2010" name="Cell">
        <title>A tissue-specific atlas of mouse protein phosphorylation and expression.</title>
        <authorList>
            <person name="Huttlin E.L."/>
            <person name="Jedrychowski M.P."/>
            <person name="Elias J.E."/>
            <person name="Goswami T."/>
            <person name="Rad R."/>
            <person name="Beausoleil S.A."/>
            <person name="Villen J."/>
            <person name="Haas W."/>
            <person name="Sowa M.E."/>
            <person name="Gygi S.P."/>
        </authorList>
    </citation>
    <scope>IDENTIFICATION BY MASS SPECTROMETRY [LARGE SCALE ANALYSIS]</scope>
    <source>
        <tissue>Brain</tissue>
    </source>
</reference>
<evidence type="ECO:0000255" key="1"/>
<evidence type="ECO:0000255" key="2">
    <source>
        <dbReference type="PROSITE-ProRule" id="PRU00283"/>
    </source>
</evidence>
<evidence type="ECO:0000256" key="3">
    <source>
        <dbReference type="SAM" id="MobiDB-lite"/>
    </source>
</evidence>
<evidence type="ECO:0000269" key="4">
    <source>
    </source>
</evidence>
<evidence type="ECO:0000305" key="5"/>
<organism>
    <name type="scientific">Mus musculus</name>
    <name type="common">Mouse</name>
    <dbReference type="NCBI Taxonomy" id="10090"/>
    <lineage>
        <taxon>Eukaryota</taxon>
        <taxon>Metazoa</taxon>
        <taxon>Chordata</taxon>
        <taxon>Craniata</taxon>
        <taxon>Vertebrata</taxon>
        <taxon>Euteleostomi</taxon>
        <taxon>Mammalia</taxon>
        <taxon>Eutheria</taxon>
        <taxon>Euarchontoglires</taxon>
        <taxon>Glires</taxon>
        <taxon>Rodentia</taxon>
        <taxon>Myomorpha</taxon>
        <taxon>Muroidea</taxon>
        <taxon>Muridae</taxon>
        <taxon>Murinae</taxon>
        <taxon>Mus</taxon>
        <taxon>Mus</taxon>
    </lineage>
</organism>
<keyword id="KW-0067">ATP-binding</keyword>
<keyword id="KW-0175">Coiled coil</keyword>
<keyword id="KW-0963">Cytoplasm</keyword>
<keyword id="KW-0206">Cytoskeleton</keyword>
<keyword id="KW-0493">Microtubule</keyword>
<keyword id="KW-0505">Motor protein</keyword>
<keyword id="KW-0547">Nucleotide-binding</keyword>
<keyword id="KW-1185">Reference proteome</keyword>